<dbReference type="EC" id="6.1.1.23" evidence="1"/>
<dbReference type="EMBL" id="CT971583">
    <property type="protein sequence ID" value="CAK24884.1"/>
    <property type="molecule type" value="Genomic_DNA"/>
</dbReference>
<dbReference type="SMR" id="A5GPL9"/>
<dbReference type="STRING" id="32051.SynWH7803_2458"/>
<dbReference type="KEGG" id="syx:SynWH7803_2458"/>
<dbReference type="eggNOG" id="COG0173">
    <property type="taxonomic scope" value="Bacteria"/>
</dbReference>
<dbReference type="HOGENOM" id="CLU_014330_3_2_3"/>
<dbReference type="OrthoDB" id="9802326at2"/>
<dbReference type="Proteomes" id="UP000001566">
    <property type="component" value="Chromosome"/>
</dbReference>
<dbReference type="GO" id="GO:0005737">
    <property type="term" value="C:cytoplasm"/>
    <property type="evidence" value="ECO:0007669"/>
    <property type="project" value="UniProtKB-SubCell"/>
</dbReference>
<dbReference type="GO" id="GO:0004815">
    <property type="term" value="F:aspartate-tRNA ligase activity"/>
    <property type="evidence" value="ECO:0007669"/>
    <property type="project" value="UniProtKB-UniRule"/>
</dbReference>
<dbReference type="GO" id="GO:0050560">
    <property type="term" value="F:aspartate-tRNA(Asn) ligase activity"/>
    <property type="evidence" value="ECO:0007669"/>
    <property type="project" value="UniProtKB-EC"/>
</dbReference>
<dbReference type="GO" id="GO:0005524">
    <property type="term" value="F:ATP binding"/>
    <property type="evidence" value="ECO:0007669"/>
    <property type="project" value="UniProtKB-UniRule"/>
</dbReference>
<dbReference type="GO" id="GO:0003676">
    <property type="term" value="F:nucleic acid binding"/>
    <property type="evidence" value="ECO:0007669"/>
    <property type="project" value="InterPro"/>
</dbReference>
<dbReference type="GO" id="GO:0006422">
    <property type="term" value="P:aspartyl-tRNA aminoacylation"/>
    <property type="evidence" value="ECO:0007669"/>
    <property type="project" value="UniProtKB-UniRule"/>
</dbReference>
<dbReference type="CDD" id="cd00777">
    <property type="entry name" value="AspRS_core"/>
    <property type="match status" value="1"/>
</dbReference>
<dbReference type="CDD" id="cd04317">
    <property type="entry name" value="EcAspRS_like_N"/>
    <property type="match status" value="1"/>
</dbReference>
<dbReference type="Gene3D" id="3.30.930.10">
    <property type="entry name" value="Bira Bifunctional Protein, Domain 2"/>
    <property type="match status" value="1"/>
</dbReference>
<dbReference type="Gene3D" id="3.30.1360.30">
    <property type="entry name" value="GAD-like domain"/>
    <property type="match status" value="1"/>
</dbReference>
<dbReference type="Gene3D" id="2.40.50.140">
    <property type="entry name" value="Nucleic acid-binding proteins"/>
    <property type="match status" value="1"/>
</dbReference>
<dbReference type="HAMAP" id="MF_00044">
    <property type="entry name" value="Asp_tRNA_synth_type1"/>
    <property type="match status" value="1"/>
</dbReference>
<dbReference type="InterPro" id="IPR004364">
    <property type="entry name" value="Aa-tRNA-synt_II"/>
</dbReference>
<dbReference type="InterPro" id="IPR006195">
    <property type="entry name" value="aa-tRNA-synth_II"/>
</dbReference>
<dbReference type="InterPro" id="IPR045864">
    <property type="entry name" value="aa-tRNA-synth_II/BPL/LPL"/>
</dbReference>
<dbReference type="InterPro" id="IPR004524">
    <property type="entry name" value="Asp-tRNA-ligase_1"/>
</dbReference>
<dbReference type="InterPro" id="IPR047089">
    <property type="entry name" value="Asp-tRNA-ligase_1_N"/>
</dbReference>
<dbReference type="InterPro" id="IPR002312">
    <property type="entry name" value="Asp/Asn-tRNA-synth_IIb"/>
</dbReference>
<dbReference type="InterPro" id="IPR047090">
    <property type="entry name" value="AspRS_core"/>
</dbReference>
<dbReference type="InterPro" id="IPR004115">
    <property type="entry name" value="GAD-like_sf"/>
</dbReference>
<dbReference type="InterPro" id="IPR029351">
    <property type="entry name" value="GAD_dom"/>
</dbReference>
<dbReference type="InterPro" id="IPR012340">
    <property type="entry name" value="NA-bd_OB-fold"/>
</dbReference>
<dbReference type="InterPro" id="IPR004365">
    <property type="entry name" value="NA-bd_OB_tRNA"/>
</dbReference>
<dbReference type="NCBIfam" id="TIGR00459">
    <property type="entry name" value="aspS_bact"/>
    <property type="match status" value="1"/>
</dbReference>
<dbReference type="NCBIfam" id="NF001750">
    <property type="entry name" value="PRK00476.1"/>
    <property type="match status" value="1"/>
</dbReference>
<dbReference type="PANTHER" id="PTHR22594:SF5">
    <property type="entry name" value="ASPARTATE--TRNA LIGASE, MITOCHONDRIAL"/>
    <property type="match status" value="1"/>
</dbReference>
<dbReference type="PANTHER" id="PTHR22594">
    <property type="entry name" value="ASPARTYL/LYSYL-TRNA SYNTHETASE"/>
    <property type="match status" value="1"/>
</dbReference>
<dbReference type="Pfam" id="PF02938">
    <property type="entry name" value="GAD"/>
    <property type="match status" value="1"/>
</dbReference>
<dbReference type="Pfam" id="PF00152">
    <property type="entry name" value="tRNA-synt_2"/>
    <property type="match status" value="1"/>
</dbReference>
<dbReference type="Pfam" id="PF01336">
    <property type="entry name" value="tRNA_anti-codon"/>
    <property type="match status" value="1"/>
</dbReference>
<dbReference type="PRINTS" id="PR01042">
    <property type="entry name" value="TRNASYNTHASP"/>
</dbReference>
<dbReference type="SUPFAM" id="SSF55681">
    <property type="entry name" value="Class II aaRS and biotin synthetases"/>
    <property type="match status" value="1"/>
</dbReference>
<dbReference type="SUPFAM" id="SSF55261">
    <property type="entry name" value="GAD domain-like"/>
    <property type="match status" value="1"/>
</dbReference>
<dbReference type="SUPFAM" id="SSF50249">
    <property type="entry name" value="Nucleic acid-binding proteins"/>
    <property type="match status" value="1"/>
</dbReference>
<dbReference type="PROSITE" id="PS50862">
    <property type="entry name" value="AA_TRNA_LIGASE_II"/>
    <property type="match status" value="1"/>
</dbReference>
<proteinExistence type="inferred from homology"/>
<feature type="chain" id="PRO_1000006774" description="Aspartate--tRNA(Asp/Asn) ligase">
    <location>
        <begin position="1"/>
        <end position="611"/>
    </location>
</feature>
<feature type="region of interest" description="Aspartate" evidence="1">
    <location>
        <begin position="201"/>
        <end position="204"/>
    </location>
</feature>
<feature type="binding site" evidence="1">
    <location>
        <position position="177"/>
    </location>
    <ligand>
        <name>L-aspartate</name>
        <dbReference type="ChEBI" id="CHEBI:29991"/>
    </ligand>
</feature>
<feature type="binding site" evidence="1">
    <location>
        <begin position="223"/>
        <end position="225"/>
    </location>
    <ligand>
        <name>ATP</name>
        <dbReference type="ChEBI" id="CHEBI:30616"/>
    </ligand>
</feature>
<feature type="binding site" evidence="1">
    <location>
        <position position="223"/>
    </location>
    <ligand>
        <name>L-aspartate</name>
        <dbReference type="ChEBI" id="CHEBI:29991"/>
    </ligand>
</feature>
<feature type="binding site" evidence="1">
    <location>
        <position position="232"/>
    </location>
    <ligand>
        <name>ATP</name>
        <dbReference type="ChEBI" id="CHEBI:30616"/>
    </ligand>
</feature>
<feature type="binding site" evidence="1">
    <location>
        <position position="461"/>
    </location>
    <ligand>
        <name>L-aspartate</name>
        <dbReference type="ChEBI" id="CHEBI:29991"/>
    </ligand>
</feature>
<feature type="binding site" evidence="1">
    <location>
        <position position="499"/>
    </location>
    <ligand>
        <name>ATP</name>
        <dbReference type="ChEBI" id="CHEBI:30616"/>
    </ligand>
</feature>
<feature type="binding site" evidence="1">
    <location>
        <position position="506"/>
    </location>
    <ligand>
        <name>L-aspartate</name>
        <dbReference type="ChEBI" id="CHEBI:29991"/>
    </ligand>
</feature>
<feature type="binding site" evidence="1">
    <location>
        <begin position="551"/>
        <end position="554"/>
    </location>
    <ligand>
        <name>ATP</name>
        <dbReference type="ChEBI" id="CHEBI:30616"/>
    </ligand>
</feature>
<feature type="site" description="Important for tRNA non-discrimination" evidence="1">
    <location>
        <position position="30"/>
    </location>
</feature>
<protein>
    <recommendedName>
        <fullName evidence="1">Aspartate--tRNA(Asp/Asn) ligase</fullName>
        <ecNumber evidence="1">6.1.1.23</ecNumber>
    </recommendedName>
    <alternativeName>
        <fullName evidence="1">Aspartyl-tRNA synthetase</fullName>
        <shortName evidence="1">AspRS</shortName>
    </alternativeName>
    <alternativeName>
        <fullName evidence="1">Non-discriminating aspartyl-tRNA synthetase</fullName>
        <shortName evidence="1">ND-AspRS</shortName>
    </alternativeName>
</protein>
<evidence type="ECO:0000255" key="1">
    <source>
        <dbReference type="HAMAP-Rule" id="MF_00044"/>
    </source>
</evidence>
<comment type="function">
    <text evidence="1">Aspartyl-tRNA synthetase with relaxed tRNA specificity since it is able to aspartylate not only its cognate tRNA(Asp) but also tRNA(Asn). Reaction proceeds in two steps: L-aspartate is first activated by ATP to form Asp-AMP and then transferred to the acceptor end of tRNA(Asp/Asn).</text>
</comment>
<comment type="catalytic activity">
    <reaction evidence="1">
        <text>tRNA(Asx) + L-aspartate + ATP = L-aspartyl-tRNA(Asx) + AMP + diphosphate</text>
        <dbReference type="Rhea" id="RHEA:18349"/>
        <dbReference type="Rhea" id="RHEA-COMP:9710"/>
        <dbReference type="Rhea" id="RHEA-COMP:9711"/>
        <dbReference type="ChEBI" id="CHEBI:29991"/>
        <dbReference type="ChEBI" id="CHEBI:30616"/>
        <dbReference type="ChEBI" id="CHEBI:33019"/>
        <dbReference type="ChEBI" id="CHEBI:78442"/>
        <dbReference type="ChEBI" id="CHEBI:78516"/>
        <dbReference type="ChEBI" id="CHEBI:456215"/>
        <dbReference type="EC" id="6.1.1.23"/>
    </reaction>
</comment>
<comment type="subunit">
    <text evidence="1">Homodimer.</text>
</comment>
<comment type="subcellular location">
    <subcellularLocation>
        <location evidence="1">Cytoplasm</location>
    </subcellularLocation>
</comment>
<comment type="similarity">
    <text evidence="1">Belongs to the class-II aminoacyl-tRNA synthetase family. Type 1 subfamily.</text>
</comment>
<keyword id="KW-0030">Aminoacyl-tRNA synthetase</keyword>
<keyword id="KW-0067">ATP-binding</keyword>
<keyword id="KW-0963">Cytoplasm</keyword>
<keyword id="KW-0436">Ligase</keyword>
<keyword id="KW-0547">Nucleotide-binding</keyword>
<keyword id="KW-0648">Protein biosynthesis</keyword>
<keyword id="KW-1185">Reference proteome</keyword>
<organism>
    <name type="scientific">Synechococcus sp. (strain WH7803)</name>
    <dbReference type="NCBI Taxonomy" id="32051"/>
    <lineage>
        <taxon>Bacteria</taxon>
        <taxon>Bacillati</taxon>
        <taxon>Cyanobacteriota</taxon>
        <taxon>Cyanophyceae</taxon>
        <taxon>Synechococcales</taxon>
        <taxon>Synechococcaceae</taxon>
        <taxon>Synechococcus</taxon>
    </lineage>
</organism>
<gene>
    <name evidence="1" type="primary">aspS</name>
    <name type="ordered locus">SynWH7803_2458</name>
</gene>
<sequence>MRSNGCGDLRKEHIDNSVQLCGWVDRRRDHGGVIFIDLRDRTGTVQITVDPDLGAEAFAVAEHLRSETVLQISGKVRARPAESLNEKLATGAVEVLASGITVLNSVKGNLPFPVSVHDEENTREELRLRHRYLDLRRKRMNDNLRLRAQTIQAARRFLEDEGFIEVETPVLTRSTPEGARDYVLPSRVCGGEWFALPQSPQLFKQLLMVGGIERYYQVARCFRDEDLRADRQPEFTQLDIEMSFMDQEEILQLNESLICSIWKAVKGIDLPRPFPRMTWHDAMERYGTDRPDTRYGMELTNVSDIVKDMGFKVFSGAVKNGGAVKCIAVPGGNEALSNVRIKPGGDVFSEAQKAGAGGLAFIRVRDGGEIDTIGAIKDNLSDEQKQELLSRTGAEPGTLLLFGAGDTATVNKALDRVRQYLAKELGMVKADRDNDQWNFLWVVDFPMFEFNSDENRYEALHHPFCAPNAEDLGSDASQWADTLPGARAQAYDLVLNGLELGGGSLRIHDSALQRQVLQTVGLPLEEAQEQFGFLMDALDVGAPPHGGLAFGVDRMVMLLAGEESIRDTIAFPKTQQARCLMTNAPGGVADKQLEELHVASTWVDPTEEDSN</sequence>
<name>SYDND_SYNPW</name>
<reference key="1">
    <citation type="submission" date="2006-05" db="EMBL/GenBank/DDBJ databases">
        <authorList>
            <consortium name="Genoscope"/>
        </authorList>
    </citation>
    <scope>NUCLEOTIDE SEQUENCE [LARGE SCALE GENOMIC DNA]</scope>
    <source>
        <strain>WH7803</strain>
    </source>
</reference>
<accession>A5GPL9</accession>